<protein>
    <recommendedName>
        <fullName>S-methylmethionine--homocysteine S-methyltransferase BHMT2</fullName>
        <shortName>SMM-hcy methyltransferase</shortName>
        <ecNumber>2.1.1.10</ecNumber>
    </recommendedName>
    <alternativeName>
        <fullName>Betaine--homocysteine S-methyltransferase 2</fullName>
    </alternativeName>
</protein>
<organism>
    <name type="scientific">Rattus norvegicus</name>
    <name type="common">Rat</name>
    <dbReference type="NCBI Taxonomy" id="10116"/>
    <lineage>
        <taxon>Eukaryota</taxon>
        <taxon>Metazoa</taxon>
        <taxon>Chordata</taxon>
        <taxon>Craniata</taxon>
        <taxon>Vertebrata</taxon>
        <taxon>Euteleostomi</taxon>
        <taxon>Mammalia</taxon>
        <taxon>Eutheria</taxon>
        <taxon>Euarchontoglires</taxon>
        <taxon>Glires</taxon>
        <taxon>Rodentia</taxon>
        <taxon>Myomorpha</taxon>
        <taxon>Muroidea</taxon>
        <taxon>Muridae</taxon>
        <taxon>Murinae</taxon>
        <taxon>Rattus</taxon>
    </lineage>
</organism>
<gene>
    <name type="primary">Bhmt2</name>
</gene>
<reference key="1">
    <citation type="journal article" date="2004" name="Genome Res.">
        <title>The status, quality, and expansion of the NIH full-length cDNA project: the Mammalian Gene Collection (MGC).</title>
        <authorList>
            <consortium name="The MGC Project Team"/>
        </authorList>
    </citation>
    <scope>NUCLEOTIDE SEQUENCE [LARGE SCALE MRNA]</scope>
    <source>
        <tissue>Kidney</tissue>
    </source>
</reference>
<sequence>MAPAGGPRVKKVILERLDSGEVVVGDGGFLFTLEKRGFVKAGLWTPEAVVEYPSAVRQLHTEFLRAGADVLQTFTFSAAEDRMESKWEAVNAAACDLAQEVADGGAALVAGGICQTSLYKYHKDETRIKNIFRLQLGVFARKNVDFLIAEYFEHVEEAVWAVEVLREVGAPVAVTMCIGPEGDMHGVTPGECAVRLSRAGANIIGVNCRFGPWTSLQTMKLMKEGLRDAGLQAHLMVQCLGFHTPDCGKGGFVDLPEYPFGLEPRVATRWDIQKYAREAYNLGVRYIGGCCGFEPYHIRAIAEELAPERGFLPPASEKHGIWGSGLDMHTKPWIRARARREYWETLLPASGRPFCPSLSKPDA</sequence>
<feature type="chain" id="PRO_0000273227" description="S-methylmethionine--homocysteine S-methyltransferase BHMT2">
    <location>
        <begin position="1"/>
        <end position="363"/>
    </location>
</feature>
<feature type="domain" description="Hcy-binding" evidence="2">
    <location>
        <begin position="11"/>
        <end position="305"/>
    </location>
</feature>
<feature type="binding site" evidence="2">
    <location>
        <position position="208"/>
    </location>
    <ligand>
        <name>Zn(2+)</name>
        <dbReference type="ChEBI" id="CHEBI:29105"/>
    </ligand>
</feature>
<feature type="binding site" evidence="2">
    <location>
        <position position="290"/>
    </location>
    <ligand>
        <name>Zn(2+)</name>
        <dbReference type="ChEBI" id="CHEBI:29105"/>
    </ligand>
</feature>
<feature type="binding site" evidence="2">
    <location>
        <position position="291"/>
    </location>
    <ligand>
        <name>Zn(2+)</name>
        <dbReference type="ChEBI" id="CHEBI:29105"/>
    </ligand>
</feature>
<proteinExistence type="evidence at transcript level"/>
<keyword id="KW-0479">Metal-binding</keyword>
<keyword id="KW-0489">Methyltransferase</keyword>
<keyword id="KW-1185">Reference proteome</keyword>
<keyword id="KW-0808">Transferase</keyword>
<keyword id="KW-0862">Zinc</keyword>
<dbReference type="EC" id="2.1.1.10"/>
<dbReference type="EMBL" id="BC079366">
    <property type="protein sequence ID" value="AAH79366.1"/>
    <property type="molecule type" value="mRNA"/>
</dbReference>
<dbReference type="RefSeq" id="NP_001014278.2">
    <property type="nucleotide sequence ID" value="NM_001014256.2"/>
</dbReference>
<dbReference type="SMR" id="Q68FT5"/>
<dbReference type="FunCoup" id="Q68FT5">
    <property type="interactions" value="94"/>
</dbReference>
<dbReference type="STRING" id="10116.ENSRNOP00000058419"/>
<dbReference type="GlyGen" id="Q68FT5">
    <property type="glycosylation" value="1 site"/>
</dbReference>
<dbReference type="iPTMnet" id="Q68FT5"/>
<dbReference type="PhosphoSitePlus" id="Q68FT5"/>
<dbReference type="PaxDb" id="10116-ENSRNOP00000058419"/>
<dbReference type="GeneID" id="365972"/>
<dbReference type="KEGG" id="rno:365972"/>
<dbReference type="UCSC" id="RGD:1359418">
    <property type="organism name" value="rat"/>
</dbReference>
<dbReference type="AGR" id="RGD:1359418"/>
<dbReference type="CTD" id="23743"/>
<dbReference type="RGD" id="1359418">
    <property type="gene designation" value="Bhmt2"/>
</dbReference>
<dbReference type="eggNOG" id="KOG1579">
    <property type="taxonomic scope" value="Eukaryota"/>
</dbReference>
<dbReference type="InParanoid" id="Q68FT5"/>
<dbReference type="OrthoDB" id="28460at9989"/>
<dbReference type="PhylomeDB" id="Q68FT5"/>
<dbReference type="Reactome" id="R-RNO-1614635">
    <property type="pathway name" value="Sulfur amino acid metabolism"/>
</dbReference>
<dbReference type="UniPathway" id="UPA00051">
    <property type="reaction ID" value="UER00083"/>
</dbReference>
<dbReference type="PRO" id="PR:Q68FT5"/>
<dbReference type="Proteomes" id="UP000002494">
    <property type="component" value="Unplaced"/>
</dbReference>
<dbReference type="GO" id="GO:0005829">
    <property type="term" value="C:cytosol"/>
    <property type="evidence" value="ECO:0000318"/>
    <property type="project" value="GO_Central"/>
</dbReference>
<dbReference type="GO" id="GO:0061627">
    <property type="term" value="F:S-methylmethionine-homocysteine S-methyltransferase activity"/>
    <property type="evidence" value="ECO:0000266"/>
    <property type="project" value="RGD"/>
</dbReference>
<dbReference type="GO" id="GO:0008270">
    <property type="term" value="F:zinc ion binding"/>
    <property type="evidence" value="ECO:0000266"/>
    <property type="project" value="RGD"/>
</dbReference>
<dbReference type="GO" id="GO:0071267">
    <property type="term" value="P:L-methionine salvage"/>
    <property type="evidence" value="ECO:0000318"/>
    <property type="project" value="GO_Central"/>
</dbReference>
<dbReference type="GO" id="GO:0032259">
    <property type="term" value="P:methylation"/>
    <property type="evidence" value="ECO:0007669"/>
    <property type="project" value="UniProtKB-KW"/>
</dbReference>
<dbReference type="GO" id="GO:0046500">
    <property type="term" value="P:S-adenosylmethionine metabolic process"/>
    <property type="evidence" value="ECO:0000266"/>
    <property type="project" value="RGD"/>
</dbReference>
<dbReference type="GO" id="GO:0033477">
    <property type="term" value="P:S-methylmethionine metabolic process"/>
    <property type="evidence" value="ECO:0000266"/>
    <property type="project" value="RGD"/>
</dbReference>
<dbReference type="FunFam" id="3.20.20.330:FF:000003">
    <property type="entry name" value="Betaine--homocysteine S-methyltransferase 1"/>
    <property type="match status" value="1"/>
</dbReference>
<dbReference type="Gene3D" id="3.20.20.330">
    <property type="entry name" value="Homocysteine-binding-like domain"/>
    <property type="match status" value="1"/>
</dbReference>
<dbReference type="InterPro" id="IPR017226">
    <property type="entry name" value="Betaine-hCys_S-MeTrfase_BHMT"/>
</dbReference>
<dbReference type="InterPro" id="IPR051524">
    <property type="entry name" value="BHMT"/>
</dbReference>
<dbReference type="InterPro" id="IPR003726">
    <property type="entry name" value="HCY_dom"/>
</dbReference>
<dbReference type="InterPro" id="IPR036589">
    <property type="entry name" value="HCY_dom_sf"/>
</dbReference>
<dbReference type="PANTHER" id="PTHR46120">
    <property type="entry name" value="BETAINE--HOMOCYSTEINE S-METHYLTRANSFERASE 1"/>
    <property type="match status" value="1"/>
</dbReference>
<dbReference type="PANTHER" id="PTHR46120:SF3">
    <property type="entry name" value="S-METHYLMETHIONINE--HOMOCYSTEINE S-METHYLTRANSFERASE BHMT2"/>
    <property type="match status" value="1"/>
</dbReference>
<dbReference type="Pfam" id="PF02574">
    <property type="entry name" value="S-methyl_trans"/>
    <property type="match status" value="1"/>
</dbReference>
<dbReference type="PIRSF" id="PIRSF037505">
    <property type="entry name" value="Betaine_HMT"/>
    <property type="match status" value="1"/>
</dbReference>
<dbReference type="SUPFAM" id="SSF82282">
    <property type="entry name" value="Homocysteine S-methyltransferase"/>
    <property type="match status" value="1"/>
</dbReference>
<dbReference type="PROSITE" id="PS50970">
    <property type="entry name" value="HCY"/>
    <property type="match status" value="1"/>
</dbReference>
<comment type="function">
    <text evidence="1">Involved in the regulation of homocysteine metabolism. Converts betaine and homocysteine to dimethylglycine and methionine, respectively. This reaction is also required for the irreversible oxidation of choline (By similarity).</text>
</comment>
<comment type="catalytic activity">
    <reaction>
        <text>S-methyl-L-methionine + L-homocysteine = 2 L-methionine + H(+)</text>
        <dbReference type="Rhea" id="RHEA:26337"/>
        <dbReference type="ChEBI" id="CHEBI:15378"/>
        <dbReference type="ChEBI" id="CHEBI:57844"/>
        <dbReference type="ChEBI" id="CHEBI:58199"/>
        <dbReference type="ChEBI" id="CHEBI:58252"/>
        <dbReference type="EC" id="2.1.1.10"/>
    </reaction>
</comment>
<comment type="cofactor">
    <cofactor evidence="1">
        <name>Zn(2+)</name>
        <dbReference type="ChEBI" id="CHEBI:29105"/>
    </cofactor>
    <text evidence="1">Binds 1 zinc ion per subunit.</text>
</comment>
<comment type="pathway">
    <text>Amino-acid biosynthesis; L-methionine biosynthesis via de novo pathway; L-methionine from L-homocysteine (BhmT route): step 1/1.</text>
</comment>
<comment type="subunit">
    <text evidence="1">Homotetramer.</text>
</comment>
<accession>Q68FT5</accession>
<evidence type="ECO:0000250" key="1"/>
<evidence type="ECO:0000255" key="2">
    <source>
        <dbReference type="PROSITE-ProRule" id="PRU00333"/>
    </source>
</evidence>
<name>BHMT2_RAT</name>